<name>TRPA_THEPX</name>
<dbReference type="EC" id="4.2.1.20" evidence="1"/>
<dbReference type="EMBL" id="CP000923">
    <property type="protein sequence ID" value="ABY93143.1"/>
    <property type="molecule type" value="Genomic_DNA"/>
</dbReference>
<dbReference type="RefSeq" id="WP_009052482.1">
    <property type="nucleotide sequence ID" value="NC_010320.1"/>
</dbReference>
<dbReference type="SMR" id="B0K2T8"/>
<dbReference type="KEGG" id="tex:Teth514_1863"/>
<dbReference type="HOGENOM" id="CLU_016734_0_0_9"/>
<dbReference type="UniPathway" id="UPA00035">
    <property type="reaction ID" value="UER00044"/>
</dbReference>
<dbReference type="Proteomes" id="UP000002155">
    <property type="component" value="Chromosome"/>
</dbReference>
<dbReference type="GO" id="GO:0005829">
    <property type="term" value="C:cytosol"/>
    <property type="evidence" value="ECO:0007669"/>
    <property type="project" value="TreeGrafter"/>
</dbReference>
<dbReference type="GO" id="GO:0004834">
    <property type="term" value="F:tryptophan synthase activity"/>
    <property type="evidence" value="ECO:0007669"/>
    <property type="project" value="UniProtKB-UniRule"/>
</dbReference>
<dbReference type="CDD" id="cd04724">
    <property type="entry name" value="Tryptophan_synthase_alpha"/>
    <property type="match status" value="1"/>
</dbReference>
<dbReference type="FunFam" id="3.20.20.70:FF:000037">
    <property type="entry name" value="Tryptophan synthase alpha chain"/>
    <property type="match status" value="1"/>
</dbReference>
<dbReference type="Gene3D" id="3.20.20.70">
    <property type="entry name" value="Aldolase class I"/>
    <property type="match status" value="1"/>
</dbReference>
<dbReference type="HAMAP" id="MF_00131">
    <property type="entry name" value="Trp_synth_alpha"/>
    <property type="match status" value="1"/>
</dbReference>
<dbReference type="InterPro" id="IPR013785">
    <property type="entry name" value="Aldolase_TIM"/>
</dbReference>
<dbReference type="InterPro" id="IPR011060">
    <property type="entry name" value="RibuloseP-bd_barrel"/>
</dbReference>
<dbReference type="InterPro" id="IPR018204">
    <property type="entry name" value="Trp_synthase_alpha_AS"/>
</dbReference>
<dbReference type="InterPro" id="IPR002028">
    <property type="entry name" value="Trp_synthase_suA"/>
</dbReference>
<dbReference type="NCBIfam" id="TIGR00262">
    <property type="entry name" value="trpA"/>
    <property type="match status" value="1"/>
</dbReference>
<dbReference type="PANTHER" id="PTHR43406:SF1">
    <property type="entry name" value="TRYPTOPHAN SYNTHASE ALPHA CHAIN, CHLOROPLASTIC"/>
    <property type="match status" value="1"/>
</dbReference>
<dbReference type="PANTHER" id="PTHR43406">
    <property type="entry name" value="TRYPTOPHAN SYNTHASE, ALPHA CHAIN"/>
    <property type="match status" value="1"/>
</dbReference>
<dbReference type="Pfam" id="PF00290">
    <property type="entry name" value="Trp_syntA"/>
    <property type="match status" value="1"/>
</dbReference>
<dbReference type="SUPFAM" id="SSF51366">
    <property type="entry name" value="Ribulose-phoshate binding barrel"/>
    <property type="match status" value="1"/>
</dbReference>
<dbReference type="PROSITE" id="PS00167">
    <property type="entry name" value="TRP_SYNTHASE_ALPHA"/>
    <property type="match status" value="1"/>
</dbReference>
<organism>
    <name type="scientific">Thermoanaerobacter sp. (strain X514)</name>
    <dbReference type="NCBI Taxonomy" id="399726"/>
    <lineage>
        <taxon>Bacteria</taxon>
        <taxon>Bacillati</taxon>
        <taxon>Bacillota</taxon>
        <taxon>Clostridia</taxon>
        <taxon>Thermoanaerobacterales</taxon>
        <taxon>Thermoanaerobacteraceae</taxon>
        <taxon>Thermoanaerobacter</taxon>
    </lineage>
</organism>
<comment type="function">
    <text evidence="1">The alpha subunit is responsible for the aldol cleavage of indoleglycerol phosphate to indole and glyceraldehyde 3-phosphate.</text>
</comment>
<comment type="catalytic activity">
    <reaction evidence="1">
        <text>(1S,2R)-1-C-(indol-3-yl)glycerol 3-phosphate + L-serine = D-glyceraldehyde 3-phosphate + L-tryptophan + H2O</text>
        <dbReference type="Rhea" id="RHEA:10532"/>
        <dbReference type="ChEBI" id="CHEBI:15377"/>
        <dbReference type="ChEBI" id="CHEBI:33384"/>
        <dbReference type="ChEBI" id="CHEBI:57912"/>
        <dbReference type="ChEBI" id="CHEBI:58866"/>
        <dbReference type="ChEBI" id="CHEBI:59776"/>
        <dbReference type="EC" id="4.2.1.20"/>
    </reaction>
</comment>
<comment type="pathway">
    <text evidence="1">Amino-acid biosynthesis; L-tryptophan biosynthesis; L-tryptophan from chorismate: step 5/5.</text>
</comment>
<comment type="subunit">
    <text evidence="1">Tetramer of two alpha and two beta chains.</text>
</comment>
<comment type="similarity">
    <text evidence="1">Belongs to the TrpA family.</text>
</comment>
<keyword id="KW-0028">Amino-acid biosynthesis</keyword>
<keyword id="KW-0057">Aromatic amino acid biosynthesis</keyword>
<keyword id="KW-0456">Lyase</keyword>
<keyword id="KW-0822">Tryptophan biosynthesis</keyword>
<feature type="chain" id="PRO_1000095758" description="Tryptophan synthase alpha chain">
    <location>
        <begin position="1"/>
        <end position="262"/>
    </location>
</feature>
<feature type="active site" description="Proton acceptor" evidence="1">
    <location>
        <position position="49"/>
    </location>
</feature>
<feature type="active site" description="Proton acceptor" evidence="1">
    <location>
        <position position="60"/>
    </location>
</feature>
<protein>
    <recommendedName>
        <fullName evidence="1">Tryptophan synthase alpha chain</fullName>
        <ecNumber evidence="1">4.2.1.20</ecNumber>
    </recommendedName>
</protein>
<proteinExistence type="inferred from homology"/>
<gene>
    <name evidence="1" type="primary">trpA</name>
    <name type="ordered locus">Teth514_1863</name>
</gene>
<accession>B0K2T8</accession>
<reference key="1">
    <citation type="submission" date="2008-01" db="EMBL/GenBank/DDBJ databases">
        <title>Complete sequence of Thermoanaerobacter sp. X514.</title>
        <authorList>
            <consortium name="US DOE Joint Genome Institute"/>
            <person name="Copeland A."/>
            <person name="Lucas S."/>
            <person name="Lapidus A."/>
            <person name="Barry K."/>
            <person name="Glavina del Rio T."/>
            <person name="Dalin E."/>
            <person name="Tice H."/>
            <person name="Pitluck S."/>
            <person name="Bruce D."/>
            <person name="Goodwin L."/>
            <person name="Saunders E."/>
            <person name="Brettin T."/>
            <person name="Detter J.C."/>
            <person name="Han C."/>
            <person name="Schmutz J."/>
            <person name="Larimer F."/>
            <person name="Land M."/>
            <person name="Hauser L."/>
            <person name="Kyrpides N."/>
            <person name="Kim E."/>
            <person name="Hemme C."/>
            <person name="Fields M.W."/>
            <person name="He Z."/>
            <person name="Zhou J."/>
            <person name="Richardson P."/>
        </authorList>
    </citation>
    <scope>NUCLEOTIDE SEQUENCE [LARGE SCALE GENOMIC DNA]</scope>
    <source>
        <strain>X514</strain>
    </source>
</reference>
<sequence length="262" mass="29126">MNRIDKKFEVLKGEGRKALITFITAGDPDIETTYDIVLALEEAGSDIIELGIPYSDPLADGPTIQASSQRALNKGVKIPDIMKIVEKIRLKSDIPLVYLVYYNSIFKYGIQKFLKESKDVGIDGLIIPDLPIEERKDILEEADKYGIYLIPLVAPTSKERIKLITENGKGFVYCVSITGVTGAREDIETDIEEYMKTVSQYTNMPKAIGFGISTPEMAKKLKDFSDGIIVGSALVERIAKGYNKSEMLQEVKSFVSSLKEVL</sequence>
<evidence type="ECO:0000255" key="1">
    <source>
        <dbReference type="HAMAP-Rule" id="MF_00131"/>
    </source>
</evidence>